<protein>
    <recommendedName>
        <fullName>Lysyl oxidase homolog 4</fullName>
        <ecNumber evidence="5">1.4.3.13</ecNumber>
    </recommendedName>
    <alternativeName>
        <fullName>Lysyl oxidase-like protein 4</fullName>
    </alternativeName>
    <alternativeName>
        <fullName>Lysyl oxidase-related protein C</fullName>
    </alternativeName>
</protein>
<comment type="function">
    <text evidence="5">Catalyzes the oxidative deamination of lysine and hydroxylysine residues in collagen and elastin, resulting in the formation of covalent cross-linkages, and the stabilization of collagen and elastin fibers.</text>
</comment>
<comment type="catalytic activity">
    <reaction evidence="5">
        <text>L-lysyl-[protein] + O2 + H2O = (S)-2-amino-6-oxohexanoyl-[protein] + H2O2 + NH4(+)</text>
        <dbReference type="Rhea" id="RHEA:24544"/>
        <dbReference type="Rhea" id="RHEA-COMP:9752"/>
        <dbReference type="Rhea" id="RHEA-COMP:12448"/>
        <dbReference type="ChEBI" id="CHEBI:15377"/>
        <dbReference type="ChEBI" id="CHEBI:15379"/>
        <dbReference type="ChEBI" id="CHEBI:16240"/>
        <dbReference type="ChEBI" id="CHEBI:28938"/>
        <dbReference type="ChEBI" id="CHEBI:29969"/>
        <dbReference type="ChEBI" id="CHEBI:131803"/>
        <dbReference type="EC" id="1.4.3.13"/>
    </reaction>
</comment>
<comment type="cofactor">
    <cofactor evidence="1">
        <name>Cu cation</name>
        <dbReference type="ChEBI" id="CHEBI:23378"/>
    </cofactor>
</comment>
<comment type="cofactor">
    <cofactor evidence="2">
        <name>lysine tyrosylquinone residue</name>
        <dbReference type="ChEBI" id="CHEBI:20489"/>
    </cofactor>
    <text evidence="2">Contains 1 lysine tyrosylquinone.</text>
</comment>
<comment type="activity regulation">
    <text evidence="5">Inhibited by beta-aminopropionitrile (BAPN).</text>
</comment>
<comment type="interaction">
    <interactant intactId="EBI-749562">
        <id>Q96JB6</id>
    </interactant>
    <interactant intactId="EBI-11954292">
        <id>Q86V38</id>
        <label>ATN1</label>
    </interactant>
    <organismsDiffer>false</organismsDiffer>
    <experiments>3</experiments>
</comment>
<comment type="interaction">
    <interactant intactId="EBI-749562">
        <id>Q96JB6</id>
    </interactant>
    <interactant intactId="EBI-718729">
        <id>P55212</id>
        <label>CASP6</label>
    </interactant>
    <organismsDiffer>false</organismsDiffer>
    <experiments>3</experiments>
</comment>
<comment type="interaction">
    <interactant intactId="EBI-749562">
        <id>Q96JB6</id>
    </interactant>
    <interactant intactId="EBI-2479962">
        <id>Q92526</id>
        <label>CCT6B</label>
    </interactant>
    <organismsDiffer>false</organismsDiffer>
    <experiments>3</experiments>
</comment>
<comment type="interaction">
    <interactant intactId="EBI-749562">
        <id>Q96JB6</id>
    </interactant>
    <interactant intactId="EBI-6875961">
        <id>P02489</id>
        <label>CRYAA</label>
    </interactant>
    <organismsDiffer>false</organismsDiffer>
    <experiments>3</experiments>
</comment>
<comment type="interaction">
    <interactant intactId="EBI-749562">
        <id>Q96JB6</id>
    </interactant>
    <interactant intactId="EBI-12593112">
        <id>O75190-2</id>
        <label>DNAJB6</label>
    </interactant>
    <organismsDiffer>false</organismsDiffer>
    <experiments>3</experiments>
</comment>
<comment type="interaction">
    <interactant intactId="EBI-749562">
        <id>Q96JB6</id>
    </interactant>
    <interactant intactId="EBI-348399">
        <id>P22607</id>
        <label>FGFR3</label>
    </interactant>
    <organismsDiffer>false</organismsDiffer>
    <experiments>3</experiments>
</comment>
<comment type="interaction">
    <interactant intactId="EBI-749562">
        <id>Q96JB6</id>
    </interactant>
    <interactant intactId="EBI-8285963">
        <id>Q14957</id>
        <label>GRIN2C</label>
    </interactant>
    <organismsDiffer>false</organismsDiffer>
    <experiments>3</experiments>
</comment>
<comment type="interaction">
    <interactant intactId="EBI-749562">
        <id>Q96JB6</id>
    </interactant>
    <interactant intactId="EBI-747754">
        <id>P28799</id>
        <label>GRN</label>
    </interactant>
    <organismsDiffer>false</organismsDiffer>
    <experiments>3</experiments>
</comment>
<comment type="interaction">
    <interactant intactId="EBI-749562">
        <id>Q96JB6</id>
    </interactant>
    <interactant intactId="EBI-351506">
        <id>P06396</id>
        <label>GSN</label>
    </interactant>
    <organismsDiffer>false</organismsDiffer>
    <experiments>3</experiments>
</comment>
<comment type="interaction">
    <interactant intactId="EBI-749562">
        <id>Q96JB6</id>
    </interactant>
    <interactant intactId="EBI-352682">
        <id>P04792</id>
        <label>HSPB1</label>
    </interactant>
    <organismsDiffer>false</organismsDiffer>
    <experiments>3</experiments>
</comment>
<comment type="interaction">
    <interactant intactId="EBI-749562">
        <id>Q96JB6</id>
    </interactant>
    <interactant intactId="EBI-710124">
        <id>O60341</id>
        <label>KDM1A</label>
    </interactant>
    <organismsDiffer>false</organismsDiffer>
    <experiments>2</experiments>
</comment>
<comment type="interaction">
    <interactant intactId="EBI-749562">
        <id>Q96JB6</id>
    </interactant>
    <interactant intactId="EBI-10975473">
        <id>O60333-2</id>
        <label>KIF1B</label>
    </interactant>
    <organismsDiffer>false</organismsDiffer>
    <experiments>3</experiments>
</comment>
<comment type="interaction">
    <interactant intactId="EBI-749562">
        <id>Q96JB6</id>
    </interactant>
    <interactant intactId="EBI-948266">
        <id>O14901</id>
        <label>KLF11</label>
    </interactant>
    <organismsDiffer>false</organismsDiffer>
    <experiments>3</experiments>
</comment>
<comment type="interaction">
    <interactant intactId="EBI-749562">
        <id>Q96JB6</id>
    </interactant>
    <interactant intactId="EBI-2432309">
        <id>Q92876</id>
        <label>KLK6</label>
    </interactant>
    <organismsDiffer>false</organismsDiffer>
    <experiments>3</experiments>
</comment>
<comment type="interaction">
    <interactant intactId="EBI-749562">
        <id>Q96JB6</id>
    </interactant>
    <interactant intactId="EBI-21591415">
        <id>P13473-2</id>
        <label>LAMP2</label>
    </interactant>
    <organismsDiffer>false</organismsDiffer>
    <experiments>3</experiments>
</comment>
<comment type="interaction">
    <interactant intactId="EBI-749562">
        <id>Q96JB6</id>
    </interactant>
    <interactant intactId="EBI-912440">
        <id>Q96LA8</id>
        <label>PRMT6</label>
    </interactant>
    <organismsDiffer>false</organismsDiffer>
    <experiments>2</experiments>
</comment>
<comment type="interaction">
    <interactant intactId="EBI-749562">
        <id>Q96JB6</id>
    </interactant>
    <interactant intactId="EBI-396669">
        <id>Q9Y3C5</id>
        <label>RNF11</label>
    </interactant>
    <organismsDiffer>false</organismsDiffer>
    <experiments>3</experiments>
</comment>
<comment type="interaction">
    <interactant intactId="EBI-749562">
        <id>Q96JB6</id>
    </interactant>
    <interactant intactId="EBI-5235340">
        <id>Q7Z699</id>
        <label>SPRED1</label>
    </interactant>
    <organismsDiffer>false</organismsDiffer>
    <experiments>3</experiments>
</comment>
<comment type="interaction">
    <interactant intactId="EBI-749562">
        <id>Q96JB6</id>
    </interactant>
    <interactant intactId="EBI-358993">
        <id>Q15645</id>
        <label>TRIP13</label>
    </interactant>
    <organismsDiffer>false</organismsDiffer>
    <experiments>6</experiments>
</comment>
<comment type="interaction">
    <interactant intactId="EBI-749562">
        <id>Q96JB6</id>
    </interactant>
    <interactant intactId="EBI-720609">
        <id>O76024</id>
        <label>WFS1</label>
    </interactant>
    <organismsDiffer>false</organismsDiffer>
    <experiments>3</experiments>
</comment>
<comment type="subcellular location">
    <subcellularLocation>
        <location evidence="7">Secreted</location>
        <location evidence="7">Extracellular space</location>
    </subcellularLocation>
</comment>
<comment type="tissue specificity">
    <text>Expressed in many tissues, the highest levels among the tissues studied being in the skeletal muscle, testis and pancreas. Expressed in cartilage.</text>
</comment>
<comment type="PTM">
    <text evidence="2">The lysine tyrosylquinone cross-link (LTQ) is generated by condensation of the epsilon-amino group of a lysine with a topaquinone produced by oxidation of tyrosine.</text>
</comment>
<comment type="PTM">
    <text evidence="8">May be proteolytically cleaved by BMP1.</text>
</comment>
<comment type="similarity">
    <text evidence="7">Belongs to the lysyl oxidase family.</text>
</comment>
<comment type="sequence caution" evidence="7">
    <conflict type="erroneous initiation">
        <sequence resource="EMBL-CDS" id="AAH07522"/>
    </conflict>
</comment>
<comment type="online information" name="Atlas of Genetics and Cytogenetics in Oncology and Haematology">
    <link uri="https://atlasgeneticsoncology.org/gene/41193/LOXL4"/>
</comment>
<feature type="signal peptide" evidence="3">
    <location>
        <begin position="1"/>
        <end position="24"/>
    </location>
</feature>
<feature type="chain" id="PRO_0000018535" description="Lysyl oxidase homolog 4">
    <location>
        <begin position="25"/>
        <end position="756"/>
    </location>
</feature>
<feature type="domain" description="SRCR 1" evidence="4">
    <location>
        <begin position="32"/>
        <end position="133"/>
    </location>
</feature>
<feature type="domain" description="SRCR 2" evidence="4">
    <location>
        <begin position="159"/>
        <end position="287"/>
    </location>
</feature>
<feature type="domain" description="SRCR 3" evidence="4">
    <location>
        <begin position="311"/>
        <end position="411"/>
    </location>
</feature>
<feature type="domain" description="SRCR 4" evidence="4">
    <location>
        <begin position="421"/>
        <end position="529"/>
    </location>
</feature>
<feature type="region of interest" description="Lysyl-oxidase like">
    <location>
        <begin position="533"/>
        <end position="736"/>
    </location>
</feature>
<feature type="binding site" evidence="3">
    <location>
        <position position="611"/>
    </location>
    <ligand>
        <name>Cu cation</name>
        <dbReference type="ChEBI" id="CHEBI:23378"/>
    </ligand>
</feature>
<feature type="binding site" evidence="3">
    <location>
        <position position="613"/>
    </location>
    <ligand>
        <name>Cu cation</name>
        <dbReference type="ChEBI" id="CHEBI:23378"/>
    </ligand>
</feature>
<feature type="binding site" evidence="3">
    <location>
        <position position="615"/>
    </location>
    <ligand>
        <name>Cu cation</name>
        <dbReference type="ChEBI" id="CHEBI:23378"/>
    </ligand>
</feature>
<feature type="site" description="Cleavage; by BMP1" evidence="8">
    <location>
        <begin position="569"/>
        <end position="570"/>
    </location>
</feature>
<feature type="modified residue" description="2',4',5'-topaquinone" evidence="2">
    <location>
        <position position="674"/>
    </location>
</feature>
<feature type="glycosylation site" description="N-linked (GlcNAc...) asparagine" evidence="3">
    <location>
        <position position="198"/>
    </location>
</feature>
<feature type="glycosylation site" description="N-linked (GlcNAc...) asparagine" evidence="3">
    <location>
        <position position="629"/>
    </location>
</feature>
<feature type="disulfide bond" evidence="4">
    <location>
        <begin position="58"/>
        <end position="122"/>
    </location>
</feature>
<feature type="disulfide bond" evidence="4">
    <location>
        <begin position="71"/>
        <end position="132"/>
    </location>
</feature>
<feature type="disulfide bond" evidence="4">
    <location>
        <begin position="102"/>
        <end position="112"/>
    </location>
</feature>
<feature type="disulfide bond" evidence="4">
    <location>
        <begin position="191"/>
        <end position="276"/>
    </location>
</feature>
<feature type="disulfide bond" evidence="4">
    <location>
        <begin position="204"/>
        <end position="286"/>
    </location>
</feature>
<feature type="disulfide bond" evidence="4">
    <location>
        <begin position="251"/>
        <end position="261"/>
    </location>
</feature>
<feature type="disulfide bond" evidence="4">
    <location>
        <begin position="336"/>
        <end position="400"/>
    </location>
</feature>
<feature type="disulfide bond" evidence="4">
    <location>
        <begin position="349"/>
        <end position="410"/>
    </location>
</feature>
<feature type="disulfide bond" evidence="4">
    <location>
        <begin position="380"/>
        <end position="390"/>
    </location>
</feature>
<feature type="disulfide bond" evidence="4">
    <location>
        <begin position="450"/>
        <end position="515"/>
    </location>
</feature>
<feature type="disulfide bond" evidence="4">
    <location>
        <begin position="463"/>
        <end position="528"/>
    </location>
</feature>
<feature type="disulfide bond" evidence="4">
    <location>
        <begin position="497"/>
        <end position="507"/>
    </location>
</feature>
<feature type="disulfide bond" evidence="4">
    <location>
        <begin position="558"/>
        <end position="564"/>
    </location>
</feature>
<feature type="disulfide bond" evidence="4">
    <location>
        <begin position="610"/>
        <end position="658"/>
    </location>
</feature>
<feature type="disulfide bond" evidence="4">
    <location>
        <begin position="642"/>
        <end position="648"/>
    </location>
</feature>
<feature type="disulfide bond" evidence="4">
    <location>
        <begin position="670"/>
        <end position="680"/>
    </location>
</feature>
<feature type="disulfide bond" evidence="4">
    <location>
        <begin position="717"/>
        <end position="731"/>
    </location>
</feature>
<feature type="cross-link" description="Lysine tyrosylquinone (Lys-Tyr)" evidence="2">
    <location>
        <begin position="638"/>
        <end position="674"/>
    </location>
</feature>
<feature type="sequence variant" id="VAR_050012" description="In dbSNP:rs33995374.">
    <original>R</original>
    <variation>Q</variation>
    <location>
        <position position="154"/>
    </location>
</feature>
<feature type="sequence variant" id="VAR_059431" description="In dbSNP:rs11189525.">
    <original>P</original>
    <variation>T</variation>
    <location>
        <position position="372"/>
    </location>
</feature>
<feature type="sequence variant" id="VAR_050013" description="In dbSNP:rs1983864." evidence="6">
    <original>D</original>
    <variation>A</variation>
    <location>
        <position position="405"/>
    </location>
</feature>
<feature type="sequence conflict" description="In Ref. 7; AAH13153." evidence="7" ref="7">
    <original>W</original>
    <variation>R</variation>
    <location>
        <position position="3"/>
    </location>
</feature>
<feature type="sequence conflict" description="In Ref. 7; AAH13153." evidence="7" ref="7">
    <original>R</original>
    <variation>Q</variation>
    <location>
        <position position="101"/>
    </location>
</feature>
<feature type="sequence conflict" description="In Ref. 3; AAL27543." evidence="7" ref="3">
    <original>S</original>
    <variation>G</variation>
    <location>
        <position position="493"/>
    </location>
</feature>
<feature type="sequence conflict" description="In Ref. 3; AAL27543." evidence="7" ref="3">
    <original>A</original>
    <variation>T</variation>
    <location>
        <position position="539"/>
    </location>
</feature>
<feature type="sequence conflict" description="In Ref. 3; AAL27543." evidence="7" ref="3">
    <original>V</original>
    <variation>A</variation>
    <location>
        <position position="542"/>
    </location>
</feature>
<feature type="sequence conflict" description="In Ref. 3; AAL27543." evidence="7" ref="3">
    <original>Y</original>
    <variation>H</variation>
    <location>
        <position position="703"/>
    </location>
</feature>
<evidence type="ECO:0000250" key="1">
    <source>
        <dbReference type="UniProtKB" id="P16636"/>
    </source>
</evidence>
<evidence type="ECO:0000250" key="2">
    <source>
        <dbReference type="UniProtKB" id="P33072"/>
    </source>
</evidence>
<evidence type="ECO:0000255" key="3"/>
<evidence type="ECO:0000255" key="4">
    <source>
        <dbReference type="PROSITE-ProRule" id="PRU00196"/>
    </source>
</evidence>
<evidence type="ECO:0000269" key="5">
    <source>
    </source>
</evidence>
<evidence type="ECO:0000269" key="6">
    <source>
    </source>
</evidence>
<evidence type="ECO:0000305" key="7"/>
<evidence type="ECO:0000305" key="8">
    <source>
    </source>
</evidence>
<dbReference type="EC" id="1.4.3.13" evidence="5"/>
<dbReference type="EMBL" id="AF338441">
    <property type="protein sequence ID" value="AAK71934.1"/>
    <property type="molecule type" value="mRNA"/>
</dbReference>
<dbReference type="EMBL" id="AY036093">
    <property type="protein sequence ID" value="AAK64186.1"/>
    <property type="molecule type" value="mRNA"/>
</dbReference>
<dbReference type="EMBL" id="AF395336">
    <property type="protein sequence ID" value="AAL27543.1"/>
    <property type="molecule type" value="mRNA"/>
</dbReference>
<dbReference type="EMBL" id="AK025542">
    <property type="protein sequence ID" value="BAB15167.1"/>
    <property type="molecule type" value="mRNA"/>
</dbReference>
<dbReference type="EMBL" id="AK172781">
    <property type="protein sequence ID" value="BAD18762.1"/>
    <property type="molecule type" value="mRNA"/>
</dbReference>
<dbReference type="EMBL" id="AL139241">
    <property type="status" value="NOT_ANNOTATED_CDS"/>
    <property type="molecule type" value="Genomic_DNA"/>
</dbReference>
<dbReference type="EMBL" id="CH471066">
    <property type="protein sequence ID" value="EAW49886.1"/>
    <property type="molecule type" value="Genomic_DNA"/>
</dbReference>
<dbReference type="EMBL" id="BC007522">
    <property type="protein sequence ID" value="AAH07522.1"/>
    <property type="status" value="ALT_INIT"/>
    <property type="molecule type" value="mRNA"/>
</dbReference>
<dbReference type="EMBL" id="BC013153">
    <property type="protein sequence ID" value="AAH13153.1"/>
    <property type="molecule type" value="mRNA"/>
</dbReference>
<dbReference type="CCDS" id="CCDS7473.1"/>
<dbReference type="RefSeq" id="NP_115587.6">
    <property type="nucleotide sequence ID" value="NM_032211.6"/>
</dbReference>
<dbReference type="RefSeq" id="XP_047281791.1">
    <property type="nucleotide sequence ID" value="XM_047425835.1"/>
</dbReference>
<dbReference type="RefSeq" id="XP_047281792.1">
    <property type="nucleotide sequence ID" value="XM_047425836.1"/>
</dbReference>
<dbReference type="RefSeq" id="XP_054222887.1">
    <property type="nucleotide sequence ID" value="XM_054366912.1"/>
</dbReference>
<dbReference type="RefSeq" id="XP_054222888.1">
    <property type="nucleotide sequence ID" value="XM_054366913.1"/>
</dbReference>
<dbReference type="SMR" id="Q96JB6"/>
<dbReference type="BioGRID" id="123925">
    <property type="interactions" value="124"/>
</dbReference>
<dbReference type="FunCoup" id="Q96JB6">
    <property type="interactions" value="195"/>
</dbReference>
<dbReference type="IntAct" id="Q96JB6">
    <property type="interactions" value="106"/>
</dbReference>
<dbReference type="MINT" id="Q96JB6"/>
<dbReference type="STRING" id="9606.ENSP00000260702"/>
<dbReference type="BindingDB" id="Q96JB6"/>
<dbReference type="ChEMBL" id="CHEMBL4295926"/>
<dbReference type="DrugCentral" id="Q96JB6"/>
<dbReference type="GlyConnect" id="1482">
    <property type="glycosylation" value="1 N-Linked glycan (1 site)"/>
</dbReference>
<dbReference type="GlyCosmos" id="Q96JB6">
    <property type="glycosylation" value="2 sites, No reported glycans"/>
</dbReference>
<dbReference type="GlyGen" id="Q96JB6">
    <property type="glycosylation" value="3 sites, 9 N-linked glycans (1 site), 1 O-linked glycan (1 site)"/>
</dbReference>
<dbReference type="iPTMnet" id="Q96JB6"/>
<dbReference type="PhosphoSitePlus" id="Q96JB6"/>
<dbReference type="BioMuta" id="LOXL4"/>
<dbReference type="DMDM" id="20177960"/>
<dbReference type="jPOST" id="Q96JB6"/>
<dbReference type="MassIVE" id="Q96JB6"/>
<dbReference type="PaxDb" id="9606-ENSP00000260702"/>
<dbReference type="PeptideAtlas" id="Q96JB6"/>
<dbReference type="ProteomicsDB" id="76933"/>
<dbReference type="Pumba" id="Q96JB6"/>
<dbReference type="Antibodypedia" id="31028">
    <property type="antibodies" value="217 antibodies from 23 providers"/>
</dbReference>
<dbReference type="DNASU" id="84171"/>
<dbReference type="Ensembl" id="ENST00000260702.4">
    <property type="protein sequence ID" value="ENSP00000260702.3"/>
    <property type="gene ID" value="ENSG00000138131.4"/>
</dbReference>
<dbReference type="GeneID" id="84171"/>
<dbReference type="KEGG" id="hsa:84171"/>
<dbReference type="MANE-Select" id="ENST00000260702.4">
    <property type="protein sequence ID" value="ENSP00000260702.3"/>
    <property type="RefSeq nucleotide sequence ID" value="NM_032211.7"/>
    <property type="RefSeq protein sequence ID" value="NP_115587.6"/>
</dbReference>
<dbReference type="UCSC" id="uc001kpa.2">
    <property type="organism name" value="human"/>
</dbReference>
<dbReference type="AGR" id="HGNC:17171"/>
<dbReference type="CTD" id="84171"/>
<dbReference type="DisGeNET" id="84171"/>
<dbReference type="GeneCards" id="LOXL4"/>
<dbReference type="HGNC" id="HGNC:17171">
    <property type="gene designation" value="LOXL4"/>
</dbReference>
<dbReference type="HPA" id="ENSG00000138131">
    <property type="expression patterns" value="Low tissue specificity"/>
</dbReference>
<dbReference type="MIM" id="607318">
    <property type="type" value="gene"/>
</dbReference>
<dbReference type="neXtProt" id="NX_Q96JB6"/>
<dbReference type="OpenTargets" id="ENSG00000138131"/>
<dbReference type="PharmGKB" id="PA30431"/>
<dbReference type="VEuPathDB" id="HostDB:ENSG00000138131"/>
<dbReference type="eggNOG" id="ENOG502QSX8">
    <property type="taxonomic scope" value="Eukaryota"/>
</dbReference>
<dbReference type="GeneTree" id="ENSGT00940000157042"/>
<dbReference type="HOGENOM" id="CLU_002555_3_0_1"/>
<dbReference type="InParanoid" id="Q96JB6"/>
<dbReference type="OMA" id="DHWGLSE"/>
<dbReference type="OrthoDB" id="547291at2759"/>
<dbReference type="PAN-GO" id="Q96JB6">
    <property type="GO annotations" value="5 GO annotations based on evolutionary models"/>
</dbReference>
<dbReference type="PhylomeDB" id="Q96JB6"/>
<dbReference type="TreeFam" id="TF326061"/>
<dbReference type="PathwayCommons" id="Q96JB6"/>
<dbReference type="Reactome" id="R-HSA-1566948">
    <property type="pathway name" value="Elastic fibre formation"/>
</dbReference>
<dbReference type="Reactome" id="R-HSA-2243919">
    <property type="pathway name" value="Crosslinking of collagen fibrils"/>
</dbReference>
<dbReference type="SignaLink" id="Q96JB6"/>
<dbReference type="BioGRID-ORCS" id="84171">
    <property type="hits" value="9 hits in 1145 CRISPR screens"/>
</dbReference>
<dbReference type="ChiTaRS" id="LOXL4">
    <property type="organism name" value="human"/>
</dbReference>
<dbReference type="GeneWiki" id="LOXL4"/>
<dbReference type="GenomeRNAi" id="84171"/>
<dbReference type="Pharos" id="Q96JB6">
    <property type="development level" value="Tchem"/>
</dbReference>
<dbReference type="PRO" id="PR:Q96JB6"/>
<dbReference type="Proteomes" id="UP000005640">
    <property type="component" value="Chromosome 10"/>
</dbReference>
<dbReference type="RNAct" id="Q96JB6">
    <property type="molecule type" value="protein"/>
</dbReference>
<dbReference type="Bgee" id="ENSG00000138131">
    <property type="expression patterns" value="Expressed in tibia and 140 other cell types or tissues"/>
</dbReference>
<dbReference type="GO" id="GO:0062023">
    <property type="term" value="C:collagen-containing extracellular matrix"/>
    <property type="evidence" value="ECO:0000318"/>
    <property type="project" value="GO_Central"/>
</dbReference>
<dbReference type="GO" id="GO:0070062">
    <property type="term" value="C:extracellular exosome"/>
    <property type="evidence" value="ECO:0007005"/>
    <property type="project" value="UniProtKB"/>
</dbReference>
<dbReference type="GO" id="GO:0005615">
    <property type="term" value="C:extracellular space"/>
    <property type="evidence" value="ECO:0000318"/>
    <property type="project" value="GO_Central"/>
</dbReference>
<dbReference type="GO" id="GO:0016020">
    <property type="term" value="C:membrane"/>
    <property type="evidence" value="ECO:0007669"/>
    <property type="project" value="InterPro"/>
</dbReference>
<dbReference type="GO" id="GO:0043235">
    <property type="term" value="C:receptor complex"/>
    <property type="evidence" value="ECO:0000314"/>
    <property type="project" value="MGI"/>
</dbReference>
<dbReference type="GO" id="GO:0005507">
    <property type="term" value="F:copper ion binding"/>
    <property type="evidence" value="ECO:0007669"/>
    <property type="project" value="InterPro"/>
</dbReference>
<dbReference type="GO" id="GO:0004720">
    <property type="term" value="F:protein-lysine 6-oxidase activity"/>
    <property type="evidence" value="ECO:0000314"/>
    <property type="project" value="UniProtKB"/>
</dbReference>
<dbReference type="GO" id="GO:0030199">
    <property type="term" value="P:collagen fibril organization"/>
    <property type="evidence" value="ECO:0000318"/>
    <property type="project" value="GO_Central"/>
</dbReference>
<dbReference type="FunFam" id="3.10.250.10:FF:000001">
    <property type="entry name" value="Lysyl oxidase 4 isoform X1"/>
    <property type="match status" value="2"/>
</dbReference>
<dbReference type="FunFam" id="3.10.250.10:FF:000008">
    <property type="entry name" value="Lysyl oxidase homolog 2"/>
    <property type="match status" value="1"/>
</dbReference>
<dbReference type="FunFam" id="3.10.250.10:FF:000023">
    <property type="entry name" value="lysyl oxidase homolog 4"/>
    <property type="match status" value="1"/>
</dbReference>
<dbReference type="Gene3D" id="3.10.250.10">
    <property type="entry name" value="SRCR-like domain"/>
    <property type="match status" value="4"/>
</dbReference>
<dbReference type="InterPro" id="IPR050912">
    <property type="entry name" value="LOX-like_protein"/>
</dbReference>
<dbReference type="InterPro" id="IPR001695">
    <property type="entry name" value="Lysyl_oxidase"/>
</dbReference>
<dbReference type="InterPro" id="IPR019828">
    <property type="entry name" value="Lysyl_oxidase_CS"/>
</dbReference>
<dbReference type="InterPro" id="IPR001190">
    <property type="entry name" value="SRCR"/>
</dbReference>
<dbReference type="InterPro" id="IPR036772">
    <property type="entry name" value="SRCR-like_dom_sf"/>
</dbReference>
<dbReference type="PANTHER" id="PTHR45817:SF5">
    <property type="entry name" value="LYSYL OXIDASE HOMOLOG 4"/>
    <property type="match status" value="1"/>
</dbReference>
<dbReference type="PANTHER" id="PTHR45817">
    <property type="entry name" value="LYSYL OXIDASE-LIKE-RELATED"/>
    <property type="match status" value="1"/>
</dbReference>
<dbReference type="Pfam" id="PF01186">
    <property type="entry name" value="Lysyl_oxidase"/>
    <property type="match status" value="1"/>
</dbReference>
<dbReference type="Pfam" id="PF00530">
    <property type="entry name" value="SRCR"/>
    <property type="match status" value="4"/>
</dbReference>
<dbReference type="PRINTS" id="PR00074">
    <property type="entry name" value="LYSYLOXIDASE"/>
</dbReference>
<dbReference type="PRINTS" id="PR00258">
    <property type="entry name" value="SPERACTRCPTR"/>
</dbReference>
<dbReference type="SMART" id="SM00202">
    <property type="entry name" value="SR"/>
    <property type="match status" value="4"/>
</dbReference>
<dbReference type="SUPFAM" id="SSF56487">
    <property type="entry name" value="SRCR-like"/>
    <property type="match status" value="4"/>
</dbReference>
<dbReference type="PROSITE" id="PS00926">
    <property type="entry name" value="LYSYL_OXIDASE"/>
    <property type="match status" value="1"/>
</dbReference>
<dbReference type="PROSITE" id="PS00420">
    <property type="entry name" value="SRCR_1"/>
    <property type="match status" value="1"/>
</dbReference>
<dbReference type="PROSITE" id="PS50287">
    <property type="entry name" value="SRCR_2"/>
    <property type="match status" value="4"/>
</dbReference>
<reference key="1">
    <citation type="journal article" date="2001" name="J. Biol. Chem.">
        <title>Molecular cloning and biological activity of a novel lysyl oxidase-related gene expressed in cartilage.</title>
        <authorList>
            <person name="Ito H."/>
            <person name="Akiyama H."/>
            <person name="Iguchi H."/>
            <person name="Iyama K."/>
            <person name="Miyamoto M."/>
            <person name="Ohsawa K."/>
            <person name="Nakamura T."/>
        </authorList>
    </citation>
    <scope>NUCLEOTIDE SEQUENCE [MRNA]</scope>
    <source>
        <tissue>Testis</tissue>
    </source>
</reference>
<reference key="2">
    <citation type="journal article" date="2001" name="Matrix Biol.">
        <title>Cloning and characterization of a fifth human lysyl oxidase isoenzyme: the third member of the lysyl oxidase-related subfamily with four scavenger receptor cysteine-rich domains.</title>
        <authorList>
            <person name="Maeki J.M."/>
            <person name="Tikkanen H."/>
            <person name="Kivirikko K.I."/>
        </authorList>
    </citation>
    <scope>NUCLEOTIDE SEQUENCE [MRNA]</scope>
</reference>
<reference key="3">
    <citation type="journal article" date="2001" name="Matrix Biol.">
        <title>A novel human lysyl oxidase-like gene (LOXL4) on chromosome 10q24 has an altered scavenger receptor cysteine rich domain.</title>
        <authorList>
            <person name="Asuncion L."/>
            <person name="Fogelgren B."/>
            <person name="Fong K.S.K."/>
            <person name="Fong S.F.T."/>
            <person name="Kim Y."/>
            <person name="Csiszar K."/>
        </authorList>
    </citation>
    <scope>NUCLEOTIDE SEQUENCE [MRNA]</scope>
    <source>
        <tissue>Placenta</tissue>
    </source>
</reference>
<reference key="4">
    <citation type="journal article" date="2004" name="Nat. Genet.">
        <title>Complete sequencing and characterization of 21,243 full-length human cDNAs.</title>
        <authorList>
            <person name="Ota T."/>
            <person name="Suzuki Y."/>
            <person name="Nishikawa T."/>
            <person name="Otsuki T."/>
            <person name="Sugiyama T."/>
            <person name="Irie R."/>
            <person name="Wakamatsu A."/>
            <person name="Hayashi K."/>
            <person name="Sato H."/>
            <person name="Nagai K."/>
            <person name="Kimura K."/>
            <person name="Makita H."/>
            <person name="Sekine M."/>
            <person name="Obayashi M."/>
            <person name="Nishi T."/>
            <person name="Shibahara T."/>
            <person name="Tanaka T."/>
            <person name="Ishii S."/>
            <person name="Yamamoto J."/>
            <person name="Saito K."/>
            <person name="Kawai Y."/>
            <person name="Isono Y."/>
            <person name="Nakamura Y."/>
            <person name="Nagahari K."/>
            <person name="Murakami K."/>
            <person name="Yasuda T."/>
            <person name="Iwayanagi T."/>
            <person name="Wagatsuma M."/>
            <person name="Shiratori A."/>
            <person name="Sudo H."/>
            <person name="Hosoiri T."/>
            <person name="Kaku Y."/>
            <person name="Kodaira H."/>
            <person name="Kondo H."/>
            <person name="Sugawara M."/>
            <person name="Takahashi M."/>
            <person name="Kanda K."/>
            <person name="Yokoi T."/>
            <person name="Furuya T."/>
            <person name="Kikkawa E."/>
            <person name="Omura Y."/>
            <person name="Abe K."/>
            <person name="Kamihara K."/>
            <person name="Katsuta N."/>
            <person name="Sato K."/>
            <person name="Tanikawa M."/>
            <person name="Yamazaki M."/>
            <person name="Ninomiya K."/>
            <person name="Ishibashi T."/>
            <person name="Yamashita H."/>
            <person name="Murakawa K."/>
            <person name="Fujimori K."/>
            <person name="Tanai H."/>
            <person name="Kimata M."/>
            <person name="Watanabe M."/>
            <person name="Hiraoka S."/>
            <person name="Chiba Y."/>
            <person name="Ishida S."/>
            <person name="Ono Y."/>
            <person name="Takiguchi S."/>
            <person name="Watanabe S."/>
            <person name="Yosida M."/>
            <person name="Hotuta T."/>
            <person name="Kusano J."/>
            <person name="Kanehori K."/>
            <person name="Takahashi-Fujii A."/>
            <person name="Hara H."/>
            <person name="Tanase T.-O."/>
            <person name="Nomura Y."/>
            <person name="Togiya S."/>
            <person name="Komai F."/>
            <person name="Hara R."/>
            <person name="Takeuchi K."/>
            <person name="Arita M."/>
            <person name="Imose N."/>
            <person name="Musashino K."/>
            <person name="Yuuki H."/>
            <person name="Oshima A."/>
            <person name="Sasaki N."/>
            <person name="Aotsuka S."/>
            <person name="Yoshikawa Y."/>
            <person name="Matsunawa H."/>
            <person name="Ichihara T."/>
            <person name="Shiohata N."/>
            <person name="Sano S."/>
            <person name="Moriya S."/>
            <person name="Momiyama H."/>
            <person name="Satoh N."/>
            <person name="Takami S."/>
            <person name="Terashima Y."/>
            <person name="Suzuki O."/>
            <person name="Nakagawa S."/>
            <person name="Senoh A."/>
            <person name="Mizoguchi H."/>
            <person name="Goto Y."/>
            <person name="Shimizu F."/>
            <person name="Wakebe H."/>
            <person name="Hishigaki H."/>
            <person name="Watanabe T."/>
            <person name="Sugiyama A."/>
            <person name="Takemoto M."/>
            <person name="Kawakami B."/>
            <person name="Yamazaki M."/>
            <person name="Watanabe K."/>
            <person name="Kumagai A."/>
            <person name="Itakura S."/>
            <person name="Fukuzumi Y."/>
            <person name="Fujimori Y."/>
            <person name="Komiyama M."/>
            <person name="Tashiro H."/>
            <person name="Tanigami A."/>
            <person name="Fujiwara T."/>
            <person name="Ono T."/>
            <person name="Yamada K."/>
            <person name="Fujii Y."/>
            <person name="Ozaki K."/>
            <person name="Hirao M."/>
            <person name="Ohmori Y."/>
            <person name="Kawabata A."/>
            <person name="Hikiji T."/>
            <person name="Kobatake N."/>
            <person name="Inagaki H."/>
            <person name="Ikema Y."/>
            <person name="Okamoto S."/>
            <person name="Okitani R."/>
            <person name="Kawakami T."/>
            <person name="Noguchi S."/>
            <person name="Itoh T."/>
            <person name="Shigeta K."/>
            <person name="Senba T."/>
            <person name="Matsumura K."/>
            <person name="Nakajima Y."/>
            <person name="Mizuno T."/>
            <person name="Morinaga M."/>
            <person name="Sasaki M."/>
            <person name="Togashi T."/>
            <person name="Oyama M."/>
            <person name="Hata H."/>
            <person name="Watanabe M."/>
            <person name="Komatsu T."/>
            <person name="Mizushima-Sugano J."/>
            <person name="Satoh T."/>
            <person name="Shirai Y."/>
            <person name="Takahashi Y."/>
            <person name="Nakagawa K."/>
            <person name="Okumura K."/>
            <person name="Nagase T."/>
            <person name="Nomura N."/>
            <person name="Kikuchi H."/>
            <person name="Masuho Y."/>
            <person name="Yamashita R."/>
            <person name="Nakai K."/>
            <person name="Yada T."/>
            <person name="Nakamura Y."/>
            <person name="Ohara O."/>
            <person name="Isogai T."/>
            <person name="Sugano S."/>
        </authorList>
    </citation>
    <scope>NUCLEOTIDE SEQUENCE [LARGE SCALE MRNA]</scope>
</reference>
<reference key="5">
    <citation type="journal article" date="2004" name="Nature">
        <title>The DNA sequence and comparative analysis of human chromosome 10.</title>
        <authorList>
            <person name="Deloukas P."/>
            <person name="Earthrowl M.E."/>
            <person name="Grafham D.V."/>
            <person name="Rubenfield M."/>
            <person name="French L."/>
            <person name="Steward C.A."/>
            <person name="Sims S.K."/>
            <person name="Jones M.C."/>
            <person name="Searle S."/>
            <person name="Scott C."/>
            <person name="Howe K."/>
            <person name="Hunt S.E."/>
            <person name="Andrews T.D."/>
            <person name="Gilbert J.G.R."/>
            <person name="Swarbreck D."/>
            <person name="Ashurst J.L."/>
            <person name="Taylor A."/>
            <person name="Battles J."/>
            <person name="Bird C.P."/>
            <person name="Ainscough R."/>
            <person name="Almeida J.P."/>
            <person name="Ashwell R.I.S."/>
            <person name="Ambrose K.D."/>
            <person name="Babbage A.K."/>
            <person name="Bagguley C.L."/>
            <person name="Bailey J."/>
            <person name="Banerjee R."/>
            <person name="Bates K."/>
            <person name="Beasley H."/>
            <person name="Bray-Allen S."/>
            <person name="Brown A.J."/>
            <person name="Brown J.Y."/>
            <person name="Burford D.C."/>
            <person name="Burrill W."/>
            <person name="Burton J."/>
            <person name="Cahill P."/>
            <person name="Camire D."/>
            <person name="Carter N.P."/>
            <person name="Chapman J.C."/>
            <person name="Clark S.Y."/>
            <person name="Clarke G."/>
            <person name="Clee C.M."/>
            <person name="Clegg S."/>
            <person name="Corby N."/>
            <person name="Coulson A."/>
            <person name="Dhami P."/>
            <person name="Dutta I."/>
            <person name="Dunn M."/>
            <person name="Faulkner L."/>
            <person name="Frankish A."/>
            <person name="Frankland J.A."/>
            <person name="Garner P."/>
            <person name="Garnett J."/>
            <person name="Gribble S."/>
            <person name="Griffiths C."/>
            <person name="Grocock R."/>
            <person name="Gustafson E."/>
            <person name="Hammond S."/>
            <person name="Harley J.L."/>
            <person name="Hart E."/>
            <person name="Heath P.D."/>
            <person name="Ho T.P."/>
            <person name="Hopkins B."/>
            <person name="Horne J."/>
            <person name="Howden P.J."/>
            <person name="Huckle E."/>
            <person name="Hynds C."/>
            <person name="Johnson C."/>
            <person name="Johnson D."/>
            <person name="Kana A."/>
            <person name="Kay M."/>
            <person name="Kimberley A.M."/>
            <person name="Kershaw J.K."/>
            <person name="Kokkinaki M."/>
            <person name="Laird G.K."/>
            <person name="Lawlor S."/>
            <person name="Lee H.M."/>
            <person name="Leongamornlert D.A."/>
            <person name="Laird G."/>
            <person name="Lloyd C."/>
            <person name="Lloyd D.M."/>
            <person name="Loveland J."/>
            <person name="Lovell J."/>
            <person name="McLaren S."/>
            <person name="McLay K.E."/>
            <person name="McMurray A."/>
            <person name="Mashreghi-Mohammadi M."/>
            <person name="Matthews L."/>
            <person name="Milne S."/>
            <person name="Nickerson T."/>
            <person name="Nguyen M."/>
            <person name="Overton-Larty E."/>
            <person name="Palmer S.A."/>
            <person name="Pearce A.V."/>
            <person name="Peck A.I."/>
            <person name="Pelan S."/>
            <person name="Phillimore B."/>
            <person name="Porter K."/>
            <person name="Rice C.M."/>
            <person name="Rogosin A."/>
            <person name="Ross M.T."/>
            <person name="Sarafidou T."/>
            <person name="Sehra H.K."/>
            <person name="Shownkeen R."/>
            <person name="Skuce C.D."/>
            <person name="Smith M."/>
            <person name="Standring L."/>
            <person name="Sycamore N."/>
            <person name="Tester J."/>
            <person name="Thorpe A."/>
            <person name="Torcasso W."/>
            <person name="Tracey A."/>
            <person name="Tromans A."/>
            <person name="Tsolas J."/>
            <person name="Wall M."/>
            <person name="Walsh J."/>
            <person name="Wang H."/>
            <person name="Weinstock K."/>
            <person name="West A.P."/>
            <person name="Willey D.L."/>
            <person name="Whitehead S.L."/>
            <person name="Wilming L."/>
            <person name="Wray P.W."/>
            <person name="Young L."/>
            <person name="Chen Y."/>
            <person name="Lovering R.C."/>
            <person name="Moschonas N.K."/>
            <person name="Siebert R."/>
            <person name="Fechtel K."/>
            <person name="Bentley D."/>
            <person name="Durbin R.M."/>
            <person name="Hubbard T."/>
            <person name="Doucette-Stamm L."/>
            <person name="Beck S."/>
            <person name="Smith D.R."/>
            <person name="Rogers J."/>
        </authorList>
    </citation>
    <scope>NUCLEOTIDE SEQUENCE [LARGE SCALE GENOMIC DNA]</scope>
</reference>
<reference key="6">
    <citation type="submission" date="2005-09" db="EMBL/GenBank/DDBJ databases">
        <authorList>
            <person name="Mural R.J."/>
            <person name="Istrail S."/>
            <person name="Sutton G.G."/>
            <person name="Florea L."/>
            <person name="Halpern A.L."/>
            <person name="Mobarry C.M."/>
            <person name="Lippert R."/>
            <person name="Walenz B."/>
            <person name="Shatkay H."/>
            <person name="Dew I."/>
            <person name="Miller J.R."/>
            <person name="Flanigan M.J."/>
            <person name="Edwards N.J."/>
            <person name="Bolanos R."/>
            <person name="Fasulo D."/>
            <person name="Halldorsson B.V."/>
            <person name="Hannenhalli S."/>
            <person name="Turner R."/>
            <person name="Yooseph S."/>
            <person name="Lu F."/>
            <person name="Nusskern D.R."/>
            <person name="Shue B.C."/>
            <person name="Zheng X.H."/>
            <person name="Zhong F."/>
            <person name="Delcher A.L."/>
            <person name="Huson D.H."/>
            <person name="Kravitz S.A."/>
            <person name="Mouchard L."/>
            <person name="Reinert K."/>
            <person name="Remington K.A."/>
            <person name="Clark A.G."/>
            <person name="Waterman M.S."/>
            <person name="Eichler E.E."/>
            <person name="Adams M.D."/>
            <person name="Hunkapiller M.W."/>
            <person name="Myers E.W."/>
            <person name="Venter J.C."/>
        </authorList>
    </citation>
    <scope>NUCLEOTIDE SEQUENCE [LARGE SCALE GENOMIC DNA]</scope>
</reference>
<reference key="7">
    <citation type="journal article" date="2004" name="Genome Res.">
        <title>The status, quality, and expansion of the NIH full-length cDNA project: the Mammalian Gene Collection (MGC).</title>
        <authorList>
            <consortium name="The MGC Project Team"/>
        </authorList>
    </citation>
    <scope>NUCLEOTIDE SEQUENCE [LARGE SCALE MRNA]</scope>
    <scope>VARIANT ALA-405</scope>
    <source>
        <tissue>Eye</tissue>
    </source>
</reference>
<reference key="8">
    <citation type="journal article" date="2003" name="J. Biol. Chem.">
        <title>Expression and purification of enzymatically active forms of the human lysyl oxidase-like protein 4.</title>
        <authorList>
            <person name="Kim M.S."/>
            <person name="Kim S.S."/>
            <person name="Jung S.T."/>
            <person name="Park J.Y."/>
            <person name="Yoo H.W."/>
            <person name="Ko J."/>
            <person name="Csiszar K."/>
            <person name="Choi S.Y."/>
            <person name="Kim Y."/>
        </authorList>
    </citation>
    <scope>PROTEIN SEQUENCE</scope>
    <scope>FUNCTION</scope>
    <scope>CATALYTIC ACTIVITY</scope>
    <scope>ACTIVITY REGULATION</scope>
    <scope>PROTEOLYTIC CLEAVAGE</scope>
</reference>
<accession>Q96JB6</accession>
<accession>Q5W0B3</accession>
<accession>Q96DY1</accession>
<accession>Q96PC0</accession>
<accession>Q9H6T5</accession>
<organism>
    <name type="scientific">Homo sapiens</name>
    <name type="common">Human</name>
    <dbReference type="NCBI Taxonomy" id="9606"/>
    <lineage>
        <taxon>Eukaryota</taxon>
        <taxon>Metazoa</taxon>
        <taxon>Chordata</taxon>
        <taxon>Craniata</taxon>
        <taxon>Vertebrata</taxon>
        <taxon>Euteleostomi</taxon>
        <taxon>Mammalia</taxon>
        <taxon>Eutheria</taxon>
        <taxon>Euarchontoglires</taxon>
        <taxon>Primates</taxon>
        <taxon>Haplorrhini</taxon>
        <taxon>Catarrhini</taxon>
        <taxon>Hominidae</taxon>
        <taxon>Homo</taxon>
    </lineage>
</organism>
<gene>
    <name type="primary">LOXL4</name>
    <name type="synonym">LOXC</name>
</gene>
<name>LOXL4_HUMAN</name>
<proteinExistence type="evidence at protein level"/>
<sequence length="756" mass="84483">MAWSPPATLFLFLLLLGQPPPSRPQSLGTTKLRLVGPESKPEEGRLEVLHQGQWGTVCDDNFAIQEATVACRQLGFEAALTWAHSAKYGQGEGPIWLDNVRCVGTESSLDQCGSNGWGVSDCSHSEDVGVICHPRRHRGYLSETVSNALGPQGRRLEEVRLKPILASAKQHSPVTEGAVEVKYEGHWRQVCDQGWTMNNSRVVCGMLGFPSEVPVDSHYYRKVWDLKMRDPKSRLKSLTNKNSFWIHQVTCLGTEPHMANCQVQVAPARGKLRPACPGGMHAVVSCVAGPHFRPPKTKPQRKGSWAEEPRVRLRSGAQVGEGRVEVLMNRQWGTVCDHRWNLISASVVCRQLGFGSAREALFGARLGQGLGPIHLSEVRCRGYERTLSDCPALEGSQNGCQHENDAAVRCNVPNMGFQNQVRLAGGRIPEEGLLEVQVEVNGVPRWGSVCSENWGLTEAMVACRQLGLGFAIHAYKETWFWSGTPRAQEVVMSGVRCSGTELALQQCQRHGPVHCSHGGGRFLAGVSCMDSAPDLVMNAQLVQETAYLEDRPLSQLYCAHEENCLSKSADHMDWPYGYRRLLRFSTQIYNLGRTDFRPKTGRDSWVWHQCHRHYHSIEVFTHYDLLTLNGSKVAEGHKASFCLEDTNCPTGLQRRYACANFGEQGVTVGCWDTYRHDIDCQWVDITDVGPGNYIFQVIVNPHYEVAESDFSNNMLQCRCKYDGHRVWLHNCHTGNSYPANAELSLEQEQRLRNNLI</sequence>
<keyword id="KW-0186">Copper</keyword>
<keyword id="KW-0903">Direct protein sequencing</keyword>
<keyword id="KW-1015">Disulfide bond</keyword>
<keyword id="KW-0325">Glycoprotein</keyword>
<keyword id="KW-0886">LTQ</keyword>
<keyword id="KW-0479">Metal-binding</keyword>
<keyword id="KW-0560">Oxidoreductase</keyword>
<keyword id="KW-1267">Proteomics identification</keyword>
<keyword id="KW-1185">Reference proteome</keyword>
<keyword id="KW-0677">Repeat</keyword>
<keyword id="KW-0964">Secreted</keyword>
<keyword id="KW-0732">Signal</keyword>
<keyword id="KW-0801">TPQ</keyword>